<dbReference type="EMBL" id="EF115543">
    <property type="protein sequence ID" value="ABK79605.1"/>
    <property type="molecule type" value="Genomic_DNA"/>
</dbReference>
<dbReference type="RefSeq" id="YP_874762.1">
    <property type="nucleotide sequence ID" value="NC_008591.1"/>
</dbReference>
<dbReference type="SMR" id="A1EA34"/>
<dbReference type="GeneID" id="4525007"/>
<dbReference type="GO" id="GO:0009535">
    <property type="term" value="C:chloroplast thylakoid membrane"/>
    <property type="evidence" value="ECO:0007669"/>
    <property type="project" value="UniProtKB-SubCell"/>
</dbReference>
<dbReference type="GO" id="GO:0009523">
    <property type="term" value="C:photosystem II"/>
    <property type="evidence" value="ECO:0007669"/>
    <property type="project" value="UniProtKB-KW"/>
</dbReference>
<dbReference type="GO" id="GO:0016168">
    <property type="term" value="F:chlorophyll binding"/>
    <property type="evidence" value="ECO:0007669"/>
    <property type="project" value="UniProtKB-UniRule"/>
</dbReference>
<dbReference type="GO" id="GO:0045156">
    <property type="term" value="F:electron transporter, transferring electrons within the cyclic electron transport pathway of photosynthesis activity"/>
    <property type="evidence" value="ECO:0007669"/>
    <property type="project" value="InterPro"/>
</dbReference>
<dbReference type="GO" id="GO:0009772">
    <property type="term" value="P:photosynthetic electron transport in photosystem II"/>
    <property type="evidence" value="ECO:0007669"/>
    <property type="project" value="InterPro"/>
</dbReference>
<dbReference type="FunFam" id="3.10.680.10:FF:000001">
    <property type="entry name" value="Photosystem II CP47 reaction center protein"/>
    <property type="match status" value="1"/>
</dbReference>
<dbReference type="Gene3D" id="3.10.680.10">
    <property type="entry name" value="Photosystem II CP47 reaction center protein"/>
    <property type="match status" value="1"/>
</dbReference>
<dbReference type="HAMAP" id="MF_01495">
    <property type="entry name" value="PSII_PsbB_CP47"/>
    <property type="match status" value="1"/>
</dbReference>
<dbReference type="InterPro" id="IPR000932">
    <property type="entry name" value="PS_antenna-like"/>
</dbReference>
<dbReference type="InterPro" id="IPR036001">
    <property type="entry name" value="PS_II_antenna-like_sf"/>
</dbReference>
<dbReference type="InterPro" id="IPR017486">
    <property type="entry name" value="PSII_PsbB"/>
</dbReference>
<dbReference type="NCBIfam" id="TIGR03039">
    <property type="entry name" value="PS_II_CP47"/>
    <property type="match status" value="1"/>
</dbReference>
<dbReference type="PANTHER" id="PTHR33180">
    <property type="entry name" value="PHOTOSYSTEM II CP43 REACTION CENTER PROTEIN"/>
    <property type="match status" value="1"/>
</dbReference>
<dbReference type="PANTHER" id="PTHR33180:SF37">
    <property type="entry name" value="PHOTOSYSTEM II CP43 REACTION CENTER PROTEIN"/>
    <property type="match status" value="1"/>
</dbReference>
<dbReference type="Pfam" id="PF00421">
    <property type="entry name" value="PSII"/>
    <property type="match status" value="1"/>
</dbReference>
<dbReference type="SUPFAM" id="SSF161077">
    <property type="entry name" value="Photosystem II antenna protein-like"/>
    <property type="match status" value="1"/>
</dbReference>
<gene>
    <name evidence="1" type="primary">psbB</name>
</gene>
<name>PSBB_AGRST</name>
<sequence>MGLPWYRVHTVVLNDPGRLLAVHIMHTALVSGWAGSMALYELAVFDPSDPVLDPMWRQGMFVIPFMTRLGITDSWGGWSISGGTVTNPGIWSYEGVAGAHIVFSGLCFLAAIWHWVYWDLEIFSDERTGKPSLDLPKIFGIHLFLAGVACFGFGAFHVTGLYGPGIWVSDPYGLTGKVQAVNPAWGAEGFDPFVPGGIASHHIAAGTLGILAGLFHLSVRPPQRLYKGLRMGNIETVLSSSIAAVFFAAFVVAGTMWYGSATTPIELFGPTRYQWDQGYFQQEIYRRVSNGLAENLSLSEAWSKIPEKLAFYDYIGNNPAKGGLFRAGSMDNGDGIAVGWLGHPVFRDKEGRELFVRRMPTFFETFPVVLVDEEGIVRADVPFRRAESKYSVEQVGVTVEFYGGELNGVSYSDPATVKKYARRSQLGEIFELDRATLKSDGVFRSSPRGWFTFGHATFALLFFFGHIWHGARTLFRDVFAGIDPDLDAQVEFGTFQKVGDPTTRKQAV</sequence>
<proteinExistence type="inferred from homology"/>
<keyword id="KW-0148">Chlorophyll</keyword>
<keyword id="KW-0150">Chloroplast</keyword>
<keyword id="KW-0157">Chromophore</keyword>
<keyword id="KW-0472">Membrane</keyword>
<keyword id="KW-0602">Photosynthesis</keyword>
<keyword id="KW-0604">Photosystem II</keyword>
<keyword id="KW-0934">Plastid</keyword>
<keyword id="KW-0793">Thylakoid</keyword>
<keyword id="KW-0812">Transmembrane</keyword>
<keyword id="KW-1133">Transmembrane helix</keyword>
<reference key="1">
    <citation type="journal article" date="2007" name="Theor. Appl. Genet.">
        <title>Complete chloroplast genome sequences of Hordeum vulgare, Sorghum bicolor and Agrostis stolonifera, and comparative analyses with other grass genomes.</title>
        <authorList>
            <person name="Saski C."/>
            <person name="Lee S.-B."/>
            <person name="Fjellheim S."/>
            <person name="Guda C."/>
            <person name="Jansen R.K."/>
            <person name="Luo H."/>
            <person name="Tomkins J."/>
            <person name="Rognli O.A."/>
            <person name="Daniell H."/>
            <person name="Clarke J.L."/>
        </authorList>
    </citation>
    <scope>NUCLEOTIDE SEQUENCE [LARGE SCALE GENOMIC DNA]</scope>
    <source>
        <strain>cv. Penn A-4</strain>
    </source>
</reference>
<feature type="chain" id="PRO_0000359793" description="Photosystem II CP47 reaction center protein">
    <location>
        <begin position="1"/>
        <end position="508"/>
    </location>
</feature>
<feature type="transmembrane region" description="Helical" evidence="1">
    <location>
        <begin position="21"/>
        <end position="36"/>
    </location>
</feature>
<feature type="transmembrane region" description="Helical" evidence="1">
    <location>
        <begin position="101"/>
        <end position="115"/>
    </location>
</feature>
<feature type="transmembrane region" description="Helical" evidence="1">
    <location>
        <begin position="140"/>
        <end position="156"/>
    </location>
</feature>
<feature type="transmembrane region" description="Helical" evidence="1">
    <location>
        <begin position="203"/>
        <end position="218"/>
    </location>
</feature>
<feature type="transmembrane region" description="Helical" evidence="1">
    <location>
        <begin position="237"/>
        <end position="252"/>
    </location>
</feature>
<feature type="transmembrane region" description="Helical" evidence="1">
    <location>
        <begin position="457"/>
        <end position="472"/>
    </location>
</feature>
<evidence type="ECO:0000255" key="1">
    <source>
        <dbReference type="HAMAP-Rule" id="MF_01495"/>
    </source>
</evidence>
<organism>
    <name type="scientific">Agrostis stolonifera</name>
    <name type="common">Creeping bentgrass</name>
    <dbReference type="NCBI Taxonomy" id="63632"/>
    <lineage>
        <taxon>Eukaryota</taxon>
        <taxon>Viridiplantae</taxon>
        <taxon>Streptophyta</taxon>
        <taxon>Embryophyta</taxon>
        <taxon>Tracheophyta</taxon>
        <taxon>Spermatophyta</taxon>
        <taxon>Magnoliopsida</taxon>
        <taxon>Liliopsida</taxon>
        <taxon>Poales</taxon>
        <taxon>Poaceae</taxon>
        <taxon>BOP clade</taxon>
        <taxon>Pooideae</taxon>
        <taxon>Poodae</taxon>
        <taxon>Poeae</taxon>
        <taxon>Poeae Chloroplast Group 1 (Aveneae type)</taxon>
        <taxon>Agrostidodinae</taxon>
        <taxon>Agrostidinae</taxon>
        <taxon>Agrostis</taxon>
    </lineage>
</organism>
<accession>A1EA34</accession>
<comment type="function">
    <text evidence="1">One of the components of the core complex of photosystem II (PSII). It binds chlorophyll and helps catalyze the primary light-induced photochemical processes of PSII. PSII is a light-driven water:plastoquinone oxidoreductase, using light energy to abstract electrons from H(2)O, generating O(2) and a proton gradient subsequently used for ATP formation.</text>
</comment>
<comment type="cofactor">
    <text evidence="1">Binds multiple chlorophylls. PSII binds additional chlorophylls, carotenoids and specific lipids.</text>
</comment>
<comment type="subunit">
    <text evidence="1">PSII is composed of 1 copy each of membrane proteins PsbA, PsbB, PsbC, PsbD, PsbE, PsbF, PsbH, PsbI, PsbJ, PsbK, PsbL, PsbM, PsbT, PsbX, PsbY, PsbZ, Psb30/Ycf12, at least 3 peripheral proteins of the oxygen-evolving complex and a large number of cofactors. It forms dimeric complexes.</text>
</comment>
<comment type="subcellular location">
    <subcellularLocation>
        <location evidence="1">Plastid</location>
        <location evidence="1">Chloroplast thylakoid membrane</location>
        <topology evidence="1">Multi-pass membrane protein</topology>
    </subcellularLocation>
</comment>
<comment type="similarity">
    <text evidence="1">Belongs to the PsbB/PsbC family. PsbB subfamily.</text>
</comment>
<geneLocation type="chloroplast"/>
<protein>
    <recommendedName>
        <fullName evidence="1">Photosystem II CP47 reaction center protein</fullName>
    </recommendedName>
    <alternativeName>
        <fullName evidence="1">PSII 47 kDa protein</fullName>
    </alternativeName>
    <alternativeName>
        <fullName evidence="1">Protein CP-47</fullName>
    </alternativeName>
</protein>